<gene>
    <name evidence="1" type="primary">cheB1</name>
    <name type="ordered locus">XOO1366</name>
</gene>
<reference key="1">
    <citation type="journal article" date="2005" name="Jpn. Agric. Res. Q.">
        <title>Genome sequence of Xanthomonas oryzae pv. oryzae suggests contribution of large numbers of effector genes and insertion sequences to its race diversity.</title>
        <authorList>
            <person name="Ochiai H."/>
            <person name="Inoue Y."/>
            <person name="Takeya M."/>
            <person name="Sasaki A."/>
            <person name="Kaku H."/>
        </authorList>
    </citation>
    <scope>NUCLEOTIDE SEQUENCE [LARGE SCALE GENOMIC DNA]</scope>
    <source>
        <strain>MAFF 311018</strain>
    </source>
</reference>
<dbReference type="EC" id="3.1.1.61" evidence="1"/>
<dbReference type="EC" id="3.5.1.44" evidence="1"/>
<dbReference type="EMBL" id="AP008229">
    <property type="protein sequence ID" value="BAE68121.1"/>
    <property type="molecule type" value="Genomic_DNA"/>
</dbReference>
<dbReference type="SMR" id="Q2P5Q6"/>
<dbReference type="KEGG" id="xom:XOO1366"/>
<dbReference type="HOGENOM" id="CLU_000445_51_0_6"/>
<dbReference type="GO" id="GO:0005737">
    <property type="term" value="C:cytoplasm"/>
    <property type="evidence" value="ECO:0007669"/>
    <property type="project" value="UniProtKB-SubCell"/>
</dbReference>
<dbReference type="GO" id="GO:0000156">
    <property type="term" value="F:phosphorelay response regulator activity"/>
    <property type="evidence" value="ECO:0007669"/>
    <property type="project" value="InterPro"/>
</dbReference>
<dbReference type="GO" id="GO:0008984">
    <property type="term" value="F:protein-glutamate methylesterase activity"/>
    <property type="evidence" value="ECO:0007669"/>
    <property type="project" value="UniProtKB-UniRule"/>
</dbReference>
<dbReference type="GO" id="GO:0050568">
    <property type="term" value="F:protein-glutamine glutaminase activity"/>
    <property type="evidence" value="ECO:0007669"/>
    <property type="project" value="UniProtKB-UniRule"/>
</dbReference>
<dbReference type="GO" id="GO:0006935">
    <property type="term" value="P:chemotaxis"/>
    <property type="evidence" value="ECO:0007669"/>
    <property type="project" value="UniProtKB-UniRule"/>
</dbReference>
<dbReference type="CDD" id="cd16432">
    <property type="entry name" value="CheB_Rec"/>
    <property type="match status" value="1"/>
</dbReference>
<dbReference type="CDD" id="cd17541">
    <property type="entry name" value="REC_CheB-like"/>
    <property type="match status" value="1"/>
</dbReference>
<dbReference type="Gene3D" id="3.40.50.2300">
    <property type="match status" value="1"/>
</dbReference>
<dbReference type="Gene3D" id="3.40.50.180">
    <property type="entry name" value="Methylesterase CheB, C-terminal domain"/>
    <property type="match status" value="1"/>
</dbReference>
<dbReference type="HAMAP" id="MF_00099">
    <property type="entry name" value="CheB_chemtxs"/>
    <property type="match status" value="1"/>
</dbReference>
<dbReference type="InterPro" id="IPR008248">
    <property type="entry name" value="CheB-like"/>
</dbReference>
<dbReference type="InterPro" id="IPR035909">
    <property type="entry name" value="CheB_C"/>
</dbReference>
<dbReference type="InterPro" id="IPR011006">
    <property type="entry name" value="CheY-like_superfamily"/>
</dbReference>
<dbReference type="InterPro" id="IPR000673">
    <property type="entry name" value="Sig_transdc_resp-reg_Me-estase"/>
</dbReference>
<dbReference type="InterPro" id="IPR001789">
    <property type="entry name" value="Sig_transdc_resp-reg_receiver"/>
</dbReference>
<dbReference type="NCBIfam" id="NF001965">
    <property type="entry name" value="PRK00742.1"/>
    <property type="match status" value="1"/>
</dbReference>
<dbReference type="NCBIfam" id="NF009206">
    <property type="entry name" value="PRK12555.1"/>
    <property type="match status" value="1"/>
</dbReference>
<dbReference type="PANTHER" id="PTHR42872">
    <property type="entry name" value="PROTEIN-GLUTAMATE METHYLESTERASE/PROTEIN-GLUTAMINE GLUTAMINASE"/>
    <property type="match status" value="1"/>
</dbReference>
<dbReference type="PANTHER" id="PTHR42872:SF6">
    <property type="entry name" value="PROTEIN-GLUTAMATE METHYLESTERASE_PROTEIN-GLUTAMINE GLUTAMINASE"/>
    <property type="match status" value="1"/>
</dbReference>
<dbReference type="Pfam" id="PF01339">
    <property type="entry name" value="CheB_methylest"/>
    <property type="match status" value="1"/>
</dbReference>
<dbReference type="Pfam" id="PF00072">
    <property type="entry name" value="Response_reg"/>
    <property type="match status" value="1"/>
</dbReference>
<dbReference type="PIRSF" id="PIRSF000876">
    <property type="entry name" value="RR_chemtxs_CheB"/>
    <property type="match status" value="1"/>
</dbReference>
<dbReference type="SMART" id="SM00448">
    <property type="entry name" value="REC"/>
    <property type="match status" value="1"/>
</dbReference>
<dbReference type="SUPFAM" id="SSF52172">
    <property type="entry name" value="CheY-like"/>
    <property type="match status" value="1"/>
</dbReference>
<dbReference type="SUPFAM" id="SSF52738">
    <property type="entry name" value="Methylesterase CheB, C-terminal domain"/>
    <property type="match status" value="1"/>
</dbReference>
<dbReference type="PROSITE" id="PS50122">
    <property type="entry name" value="CHEB"/>
    <property type="match status" value="1"/>
</dbReference>
<dbReference type="PROSITE" id="PS50110">
    <property type="entry name" value="RESPONSE_REGULATORY"/>
    <property type="match status" value="1"/>
</dbReference>
<accession>Q2P5Q6</accession>
<feature type="chain" id="PRO_0000264333" description="Protein-glutamate methylesterase/protein-glutamine glutaminase 1">
    <location>
        <begin position="1"/>
        <end position="351"/>
    </location>
</feature>
<feature type="domain" description="Response regulatory" evidence="1">
    <location>
        <begin position="1"/>
        <end position="115"/>
    </location>
</feature>
<feature type="domain" description="CheB-type methylesterase" evidence="1">
    <location>
        <begin position="161"/>
        <end position="351"/>
    </location>
</feature>
<feature type="active site" evidence="1">
    <location>
        <position position="173"/>
    </location>
</feature>
<feature type="active site" evidence="1">
    <location>
        <position position="199"/>
    </location>
</feature>
<feature type="active site" evidence="1">
    <location>
        <position position="295"/>
    </location>
</feature>
<feature type="modified residue" description="4-aspartylphosphate" evidence="1">
    <location>
        <position position="49"/>
    </location>
</feature>
<protein>
    <recommendedName>
        <fullName evidence="1">Protein-glutamate methylesterase/protein-glutamine glutaminase 1</fullName>
        <ecNumber evidence="1">3.1.1.61</ecNumber>
        <ecNumber evidence="1">3.5.1.44</ecNumber>
    </recommendedName>
</protein>
<keyword id="KW-0145">Chemotaxis</keyword>
<keyword id="KW-0963">Cytoplasm</keyword>
<keyword id="KW-0378">Hydrolase</keyword>
<keyword id="KW-0597">Phosphoprotein</keyword>
<evidence type="ECO:0000255" key="1">
    <source>
        <dbReference type="HAMAP-Rule" id="MF_00099"/>
    </source>
</evidence>
<comment type="function">
    <text evidence="1">Involved in chemotaxis. Part of a chemotaxis signal transduction system that modulates chemotaxis in response to various stimuli. Catalyzes the demethylation of specific methylglutamate residues introduced into the chemoreceptors (methyl-accepting chemotaxis proteins or MCP) by CheR. Also mediates the irreversible deamidation of specific glutamine residues to glutamic acid.</text>
</comment>
<comment type="catalytic activity">
    <reaction evidence="1">
        <text>[protein]-L-glutamate 5-O-methyl ester + H2O = L-glutamyl-[protein] + methanol + H(+)</text>
        <dbReference type="Rhea" id="RHEA:23236"/>
        <dbReference type="Rhea" id="RHEA-COMP:10208"/>
        <dbReference type="Rhea" id="RHEA-COMP:10311"/>
        <dbReference type="ChEBI" id="CHEBI:15377"/>
        <dbReference type="ChEBI" id="CHEBI:15378"/>
        <dbReference type="ChEBI" id="CHEBI:17790"/>
        <dbReference type="ChEBI" id="CHEBI:29973"/>
        <dbReference type="ChEBI" id="CHEBI:82795"/>
        <dbReference type="EC" id="3.1.1.61"/>
    </reaction>
</comment>
<comment type="catalytic activity">
    <reaction evidence="1">
        <text>L-glutaminyl-[protein] + H2O = L-glutamyl-[protein] + NH4(+)</text>
        <dbReference type="Rhea" id="RHEA:16441"/>
        <dbReference type="Rhea" id="RHEA-COMP:10207"/>
        <dbReference type="Rhea" id="RHEA-COMP:10208"/>
        <dbReference type="ChEBI" id="CHEBI:15377"/>
        <dbReference type="ChEBI" id="CHEBI:28938"/>
        <dbReference type="ChEBI" id="CHEBI:29973"/>
        <dbReference type="ChEBI" id="CHEBI:30011"/>
        <dbReference type="EC" id="3.5.1.44"/>
    </reaction>
</comment>
<comment type="subcellular location">
    <subcellularLocation>
        <location evidence="1">Cytoplasm</location>
    </subcellularLocation>
</comment>
<comment type="domain">
    <text evidence="1">Contains a C-terminal catalytic domain, and an N-terminal region which modulates catalytic activity.</text>
</comment>
<comment type="PTM">
    <text evidence="1">Phosphorylated by CheA. Phosphorylation of the N-terminal regulatory domain activates the methylesterase activity.</text>
</comment>
<comment type="similarity">
    <text evidence="1">Belongs to the CheB family.</text>
</comment>
<name>CHEB1_XANOM</name>
<organism>
    <name type="scientific">Xanthomonas oryzae pv. oryzae (strain MAFF 311018)</name>
    <dbReference type="NCBI Taxonomy" id="342109"/>
    <lineage>
        <taxon>Bacteria</taxon>
        <taxon>Pseudomonadati</taxon>
        <taxon>Pseudomonadota</taxon>
        <taxon>Gammaproteobacteria</taxon>
        <taxon>Lysobacterales</taxon>
        <taxon>Lysobacteraceae</taxon>
        <taxon>Xanthomonas</taxon>
    </lineage>
</organism>
<proteinExistence type="inferred from homology"/>
<sequence length="351" mass="37242">MVDDSAVVRQVLVNVLNDAADIEVIATAADPLLAIEKMRKQWPDVIVLDVEMPRMDGITFLRKIMSERPTPVVICSTLTEKGARVTMDALAAGAVAVVTKPRLGLKQFLTESADELVATVRSAARANVKRLAARVTAAPLEAEVKHTADVILPAQSGRAMAQTTERIVAIGTSTGGTQALEEVLTALPRVCPGIVIVQHMPEKFTAAFAARLNGLCQIAVKEAANNDRVMPGRALIAPGGKHLLLRRSGAQYFVEVLEGPPVNRHRPSVDVLFRSAARAAGSNALGIIMTGMGDDGAAGLLEMRQAGARTVAQDEQTSIVFGMPKEAIKRGGADRILALGAMAREIVTQLQ</sequence>